<sequence length="498" mass="53779">MRINPTNSGFGVSTIGEKNLGRIAQLIGPVLDVVFPLGKMPNNYNALVVKGRDTVDQQINVTCEVQQLLGNNRVRALAMSATDGLTRGMEVIDTGAALSVPVGGATLGRIFNVLGEPVDNLGPVDTRTTSPIHRSAPAFIQLDTKLSIFETGIKVVDLLAPYRRGGKIGLFGGAGVGKTVLIMELINNIAKAHGGVSVFGGVGERTREGNDLYMEMKESGVINEKNIAESKVALVYGQMNEPPGARMRVGLTALTMAEYFRDVNEQDVLLFIDNIFRFVQAGSEVSALLGRMPSAVGYQPTLSTEMGSLQERITSTKEGSITSIQAVYVPADDLTDPAPATTFAHLDATTVLSRGLAAKGIYPAVDPLDSTSTMLQPRIVGEEHYETAQRVKQTLQRYKELQDIIAILGLDELSEEDRLTVARARKIERFLSQPFFVAEVFTGSPGKYVGLTETIRGFQLILSGELDGLPEQAFYLVGNIDEATAKAMNLEKESNLKK</sequence>
<keyword id="KW-0066">ATP synthesis</keyword>
<keyword id="KW-0067">ATP-binding</keyword>
<keyword id="KW-0139">CF(1)</keyword>
<keyword id="KW-0150">Chloroplast</keyword>
<keyword id="KW-0375">Hydrogen ion transport</keyword>
<keyword id="KW-0406">Ion transport</keyword>
<keyword id="KW-0472">Membrane</keyword>
<keyword id="KW-0547">Nucleotide-binding</keyword>
<keyword id="KW-0934">Plastid</keyword>
<keyword id="KW-0793">Thylakoid</keyword>
<keyword id="KW-1278">Translocase</keyword>
<keyword id="KW-0813">Transport</keyword>
<dbReference type="EC" id="7.1.2.2" evidence="1"/>
<dbReference type="EMBL" id="AJ417588">
    <property type="protein sequence ID" value="CAD10770.1"/>
    <property type="molecule type" value="Genomic_DNA"/>
</dbReference>
<dbReference type="SMR" id="Q95AD6"/>
<dbReference type="GO" id="GO:0009535">
    <property type="term" value="C:chloroplast thylakoid membrane"/>
    <property type="evidence" value="ECO:0007669"/>
    <property type="project" value="UniProtKB-SubCell"/>
</dbReference>
<dbReference type="GO" id="GO:0005739">
    <property type="term" value="C:mitochondrion"/>
    <property type="evidence" value="ECO:0007669"/>
    <property type="project" value="GOC"/>
</dbReference>
<dbReference type="GO" id="GO:0045259">
    <property type="term" value="C:proton-transporting ATP synthase complex"/>
    <property type="evidence" value="ECO:0007669"/>
    <property type="project" value="UniProtKB-KW"/>
</dbReference>
<dbReference type="GO" id="GO:0005524">
    <property type="term" value="F:ATP binding"/>
    <property type="evidence" value="ECO:0007669"/>
    <property type="project" value="UniProtKB-UniRule"/>
</dbReference>
<dbReference type="GO" id="GO:0016887">
    <property type="term" value="F:ATP hydrolysis activity"/>
    <property type="evidence" value="ECO:0007669"/>
    <property type="project" value="InterPro"/>
</dbReference>
<dbReference type="GO" id="GO:0046933">
    <property type="term" value="F:proton-transporting ATP synthase activity, rotational mechanism"/>
    <property type="evidence" value="ECO:0007669"/>
    <property type="project" value="UniProtKB-UniRule"/>
</dbReference>
<dbReference type="GO" id="GO:0042776">
    <property type="term" value="P:proton motive force-driven mitochondrial ATP synthesis"/>
    <property type="evidence" value="ECO:0007669"/>
    <property type="project" value="TreeGrafter"/>
</dbReference>
<dbReference type="CDD" id="cd18110">
    <property type="entry name" value="ATP-synt_F1_beta_C"/>
    <property type="match status" value="1"/>
</dbReference>
<dbReference type="CDD" id="cd18115">
    <property type="entry name" value="ATP-synt_F1_beta_N"/>
    <property type="match status" value="1"/>
</dbReference>
<dbReference type="CDD" id="cd01133">
    <property type="entry name" value="F1-ATPase_beta_CD"/>
    <property type="match status" value="1"/>
</dbReference>
<dbReference type="FunFam" id="1.10.1140.10:FF:000001">
    <property type="entry name" value="ATP synthase subunit beta"/>
    <property type="match status" value="1"/>
</dbReference>
<dbReference type="FunFam" id="3.40.50.12240:FF:000006">
    <property type="entry name" value="ATP synthase subunit beta"/>
    <property type="match status" value="1"/>
</dbReference>
<dbReference type="FunFam" id="3.40.50.300:FF:000004">
    <property type="entry name" value="ATP synthase subunit beta"/>
    <property type="match status" value="1"/>
</dbReference>
<dbReference type="FunFam" id="2.40.10.170:FF:000002">
    <property type="entry name" value="ATP synthase subunit beta, chloroplastic"/>
    <property type="match status" value="1"/>
</dbReference>
<dbReference type="Gene3D" id="2.40.10.170">
    <property type="match status" value="1"/>
</dbReference>
<dbReference type="Gene3D" id="1.10.1140.10">
    <property type="entry name" value="Bovine Mitochondrial F1-atpase, Atp Synthase Beta Chain, Chain D, domain 3"/>
    <property type="match status" value="1"/>
</dbReference>
<dbReference type="Gene3D" id="3.40.50.300">
    <property type="entry name" value="P-loop containing nucleotide triphosphate hydrolases"/>
    <property type="match status" value="1"/>
</dbReference>
<dbReference type="HAMAP" id="MF_01347">
    <property type="entry name" value="ATP_synth_beta_bact"/>
    <property type="match status" value="1"/>
</dbReference>
<dbReference type="InterPro" id="IPR003593">
    <property type="entry name" value="AAA+_ATPase"/>
</dbReference>
<dbReference type="InterPro" id="IPR055190">
    <property type="entry name" value="ATP-synt_VA_C"/>
</dbReference>
<dbReference type="InterPro" id="IPR005722">
    <property type="entry name" value="ATP_synth_F1_bsu"/>
</dbReference>
<dbReference type="InterPro" id="IPR020003">
    <property type="entry name" value="ATPase_a/bsu_AS"/>
</dbReference>
<dbReference type="InterPro" id="IPR050053">
    <property type="entry name" value="ATPase_alpha/beta_chains"/>
</dbReference>
<dbReference type="InterPro" id="IPR004100">
    <property type="entry name" value="ATPase_F1/V1/A1_a/bsu_N"/>
</dbReference>
<dbReference type="InterPro" id="IPR036121">
    <property type="entry name" value="ATPase_F1/V1/A1_a/bsu_N_sf"/>
</dbReference>
<dbReference type="InterPro" id="IPR000194">
    <property type="entry name" value="ATPase_F1/V1/A1_a/bsu_nucl-bd"/>
</dbReference>
<dbReference type="InterPro" id="IPR024034">
    <property type="entry name" value="ATPase_F1/V1_b/a_C"/>
</dbReference>
<dbReference type="InterPro" id="IPR027417">
    <property type="entry name" value="P-loop_NTPase"/>
</dbReference>
<dbReference type="NCBIfam" id="TIGR01039">
    <property type="entry name" value="atpD"/>
    <property type="match status" value="1"/>
</dbReference>
<dbReference type="PANTHER" id="PTHR15184">
    <property type="entry name" value="ATP SYNTHASE"/>
    <property type="match status" value="1"/>
</dbReference>
<dbReference type="PANTHER" id="PTHR15184:SF71">
    <property type="entry name" value="ATP SYNTHASE SUBUNIT BETA, MITOCHONDRIAL"/>
    <property type="match status" value="1"/>
</dbReference>
<dbReference type="Pfam" id="PF00006">
    <property type="entry name" value="ATP-synt_ab"/>
    <property type="match status" value="1"/>
</dbReference>
<dbReference type="Pfam" id="PF02874">
    <property type="entry name" value="ATP-synt_ab_N"/>
    <property type="match status" value="1"/>
</dbReference>
<dbReference type="Pfam" id="PF22919">
    <property type="entry name" value="ATP-synt_VA_C"/>
    <property type="match status" value="1"/>
</dbReference>
<dbReference type="SMART" id="SM00382">
    <property type="entry name" value="AAA"/>
    <property type="match status" value="1"/>
</dbReference>
<dbReference type="SUPFAM" id="SSF47917">
    <property type="entry name" value="C-terminal domain of alpha and beta subunits of F1 ATP synthase"/>
    <property type="match status" value="1"/>
</dbReference>
<dbReference type="SUPFAM" id="SSF50615">
    <property type="entry name" value="N-terminal domain of alpha and beta subunits of F1 ATP synthase"/>
    <property type="match status" value="1"/>
</dbReference>
<dbReference type="SUPFAM" id="SSF52540">
    <property type="entry name" value="P-loop containing nucleoside triphosphate hydrolases"/>
    <property type="match status" value="1"/>
</dbReference>
<dbReference type="PROSITE" id="PS00152">
    <property type="entry name" value="ATPASE_ALPHA_BETA"/>
    <property type="match status" value="1"/>
</dbReference>
<reference key="1">
    <citation type="book" date="2000" name="MONOCOTS: SYSTEMATICS AND EVOLUTION">
        <title>Higher-level systematics of the monocotyledons: an assessment of current knowledge and a new classification.</title>
        <editorList>
            <person name="Wilson K.L."/>
            <person name="Morrison D.A."/>
        </editorList>
        <authorList>
            <person name="Chase M.W."/>
        </authorList>
    </citation>
    <scope>NUCLEOTIDE SEQUENCE [GENOMIC DNA]</scope>
</reference>
<geneLocation type="chloroplast"/>
<proteinExistence type="inferred from homology"/>
<evidence type="ECO:0000255" key="1">
    <source>
        <dbReference type="HAMAP-Rule" id="MF_01347"/>
    </source>
</evidence>
<feature type="chain" id="PRO_0000254532" description="ATP synthase subunit beta, chloroplastic">
    <location>
        <begin position="1"/>
        <end position="498"/>
    </location>
</feature>
<feature type="binding site" evidence="1">
    <location>
        <begin position="172"/>
        <end position="179"/>
    </location>
    <ligand>
        <name>ATP</name>
        <dbReference type="ChEBI" id="CHEBI:30616"/>
    </ligand>
</feature>
<protein>
    <recommendedName>
        <fullName evidence="1">ATP synthase subunit beta, chloroplastic</fullName>
        <ecNumber evidence="1">7.1.2.2</ecNumber>
    </recommendedName>
    <alternativeName>
        <fullName evidence="1">ATP synthase F1 sector subunit beta</fullName>
    </alternativeName>
    <alternativeName>
        <fullName evidence="1">F-ATPase subunit beta</fullName>
    </alternativeName>
</protein>
<gene>
    <name evidence="1" type="primary">atpB</name>
</gene>
<organism>
    <name type="scientific">Whiteheadia bifolia</name>
    <name type="common">Elephants ears</name>
    <name type="synonym">Massonia bifolia</name>
    <dbReference type="NCBI Taxonomy" id="59074"/>
    <lineage>
        <taxon>Eukaryota</taxon>
        <taxon>Viridiplantae</taxon>
        <taxon>Streptophyta</taxon>
        <taxon>Embryophyta</taxon>
        <taxon>Tracheophyta</taxon>
        <taxon>Spermatophyta</taxon>
        <taxon>Magnoliopsida</taxon>
        <taxon>Liliopsida</taxon>
        <taxon>Asparagales</taxon>
        <taxon>Hyacinthaceae</taxon>
        <taxon>Hyacinthoideae</taxon>
        <taxon>Massonieae</taxon>
        <taxon>Whiteheadia</taxon>
    </lineage>
</organism>
<accession>Q95AD6</accession>
<name>ATPB_WHIBI</name>
<comment type="function">
    <text evidence="1">Produces ATP from ADP in the presence of a proton gradient across the membrane. The catalytic sites are hosted primarily by the beta subunits.</text>
</comment>
<comment type="catalytic activity">
    <reaction evidence="1">
        <text>ATP + H2O + 4 H(+)(in) = ADP + phosphate + 5 H(+)(out)</text>
        <dbReference type="Rhea" id="RHEA:57720"/>
        <dbReference type="ChEBI" id="CHEBI:15377"/>
        <dbReference type="ChEBI" id="CHEBI:15378"/>
        <dbReference type="ChEBI" id="CHEBI:30616"/>
        <dbReference type="ChEBI" id="CHEBI:43474"/>
        <dbReference type="ChEBI" id="CHEBI:456216"/>
        <dbReference type="EC" id="7.1.2.2"/>
    </reaction>
</comment>
<comment type="subunit">
    <text evidence="1">F-type ATPases have 2 components, CF(1) - the catalytic core - and CF(0) - the membrane proton channel. CF(1) has five subunits: alpha(3), beta(3), gamma(1), delta(1), epsilon(1). CF(0) has four main subunits: a(1), b(1), b'(1) and c(9-12).</text>
</comment>
<comment type="subcellular location">
    <subcellularLocation>
        <location evidence="1">Plastid</location>
        <location evidence="1">Chloroplast thylakoid membrane</location>
        <topology evidence="1">Peripheral membrane protein</topology>
    </subcellularLocation>
</comment>
<comment type="similarity">
    <text evidence="1">Belongs to the ATPase alpha/beta chains family.</text>
</comment>